<sequence>MFPALSSERVLVLIPARMAATRLPGKPLADVGGRPMIVEVARRAAAAAIGPVAVATDSEEIAAAVRAAGVTAVLTRADHPSGSDRIFEALGALDPDGAVDVVVNVQGDLPTIAPQTIRSALAPLAEPAVDIATLCAEIVVEDERTDPNVVKVVGSPLDDNLLRALYFTRATAPFGAGPLYHHIGLYAYRRPALARFVALAPSMLEQREKLEQLRALEAGMRIDVAVVDAVPLGVDTQAHLDRARAILALEAAEQK</sequence>
<reference key="1">
    <citation type="submission" date="2007-07" db="EMBL/GenBank/DDBJ databases">
        <title>Complete sequence of chromosome of Xanthobacter autotrophicus Py2.</title>
        <authorList>
            <consortium name="US DOE Joint Genome Institute"/>
            <person name="Copeland A."/>
            <person name="Lucas S."/>
            <person name="Lapidus A."/>
            <person name="Barry K."/>
            <person name="Glavina del Rio T."/>
            <person name="Hammon N."/>
            <person name="Israni S."/>
            <person name="Dalin E."/>
            <person name="Tice H."/>
            <person name="Pitluck S."/>
            <person name="Sims D."/>
            <person name="Brettin T."/>
            <person name="Bruce D."/>
            <person name="Detter J.C."/>
            <person name="Han C."/>
            <person name="Tapia R."/>
            <person name="Brainard J."/>
            <person name="Schmutz J."/>
            <person name="Larimer F."/>
            <person name="Land M."/>
            <person name="Hauser L."/>
            <person name="Kyrpides N."/>
            <person name="Kim E."/>
            <person name="Ensigns S.A."/>
            <person name="Richardson P."/>
        </authorList>
    </citation>
    <scope>NUCLEOTIDE SEQUENCE [LARGE SCALE GENOMIC DNA]</scope>
    <source>
        <strain>ATCC BAA-1158 / Py2</strain>
    </source>
</reference>
<name>KDSB_XANP2</name>
<evidence type="ECO:0000255" key="1">
    <source>
        <dbReference type="HAMAP-Rule" id="MF_00057"/>
    </source>
</evidence>
<organism>
    <name type="scientific">Xanthobacter autotrophicus (strain ATCC BAA-1158 / Py2)</name>
    <dbReference type="NCBI Taxonomy" id="78245"/>
    <lineage>
        <taxon>Bacteria</taxon>
        <taxon>Pseudomonadati</taxon>
        <taxon>Pseudomonadota</taxon>
        <taxon>Alphaproteobacteria</taxon>
        <taxon>Hyphomicrobiales</taxon>
        <taxon>Xanthobacteraceae</taxon>
        <taxon>Xanthobacter</taxon>
    </lineage>
</organism>
<proteinExistence type="inferred from homology"/>
<keyword id="KW-0963">Cytoplasm</keyword>
<keyword id="KW-0448">Lipopolysaccharide biosynthesis</keyword>
<keyword id="KW-0548">Nucleotidyltransferase</keyword>
<keyword id="KW-1185">Reference proteome</keyword>
<keyword id="KW-0808">Transferase</keyword>
<accession>A7IIM9</accession>
<comment type="function">
    <text evidence="1">Activates KDO (a required 8-carbon sugar) for incorporation into bacterial lipopolysaccharide in Gram-negative bacteria.</text>
</comment>
<comment type="catalytic activity">
    <reaction evidence="1">
        <text>3-deoxy-alpha-D-manno-oct-2-ulosonate + CTP = CMP-3-deoxy-beta-D-manno-octulosonate + diphosphate</text>
        <dbReference type="Rhea" id="RHEA:23448"/>
        <dbReference type="ChEBI" id="CHEBI:33019"/>
        <dbReference type="ChEBI" id="CHEBI:37563"/>
        <dbReference type="ChEBI" id="CHEBI:85986"/>
        <dbReference type="ChEBI" id="CHEBI:85987"/>
        <dbReference type="EC" id="2.7.7.38"/>
    </reaction>
</comment>
<comment type="pathway">
    <text evidence="1">Nucleotide-sugar biosynthesis; CMP-3-deoxy-D-manno-octulosonate biosynthesis; CMP-3-deoxy-D-manno-octulosonate from 3-deoxy-D-manno-octulosonate and CTP: step 1/1.</text>
</comment>
<comment type="pathway">
    <text evidence="1">Bacterial outer membrane biogenesis; lipopolysaccharide biosynthesis.</text>
</comment>
<comment type="subcellular location">
    <subcellularLocation>
        <location evidence="1">Cytoplasm</location>
    </subcellularLocation>
</comment>
<comment type="similarity">
    <text evidence="1">Belongs to the KdsB family.</text>
</comment>
<dbReference type="EC" id="2.7.7.38" evidence="1"/>
<dbReference type="EMBL" id="CP000781">
    <property type="protein sequence ID" value="ABS67872.1"/>
    <property type="molecule type" value="Genomic_DNA"/>
</dbReference>
<dbReference type="SMR" id="A7IIM9"/>
<dbReference type="STRING" id="78245.Xaut_2630"/>
<dbReference type="KEGG" id="xau:Xaut_2630"/>
<dbReference type="eggNOG" id="COG1212">
    <property type="taxonomic scope" value="Bacteria"/>
</dbReference>
<dbReference type="HOGENOM" id="CLU_065038_0_1_5"/>
<dbReference type="OrthoDB" id="9815559at2"/>
<dbReference type="PhylomeDB" id="A7IIM9"/>
<dbReference type="UniPathway" id="UPA00030"/>
<dbReference type="UniPathway" id="UPA00358">
    <property type="reaction ID" value="UER00476"/>
</dbReference>
<dbReference type="Proteomes" id="UP000002417">
    <property type="component" value="Chromosome"/>
</dbReference>
<dbReference type="GO" id="GO:0005829">
    <property type="term" value="C:cytosol"/>
    <property type="evidence" value="ECO:0007669"/>
    <property type="project" value="TreeGrafter"/>
</dbReference>
<dbReference type="GO" id="GO:0008690">
    <property type="term" value="F:3-deoxy-manno-octulosonate cytidylyltransferase activity"/>
    <property type="evidence" value="ECO:0007669"/>
    <property type="project" value="UniProtKB-UniRule"/>
</dbReference>
<dbReference type="GO" id="GO:0033468">
    <property type="term" value="P:CMP-keto-3-deoxy-D-manno-octulosonic acid biosynthetic process"/>
    <property type="evidence" value="ECO:0007669"/>
    <property type="project" value="UniProtKB-UniRule"/>
</dbReference>
<dbReference type="GO" id="GO:0009103">
    <property type="term" value="P:lipopolysaccharide biosynthetic process"/>
    <property type="evidence" value="ECO:0007669"/>
    <property type="project" value="UniProtKB-UniRule"/>
</dbReference>
<dbReference type="CDD" id="cd02517">
    <property type="entry name" value="CMP-KDO-Synthetase"/>
    <property type="match status" value="1"/>
</dbReference>
<dbReference type="Gene3D" id="3.90.550.10">
    <property type="entry name" value="Spore Coat Polysaccharide Biosynthesis Protein SpsA, Chain A"/>
    <property type="match status" value="1"/>
</dbReference>
<dbReference type="HAMAP" id="MF_00057">
    <property type="entry name" value="KdsB"/>
    <property type="match status" value="1"/>
</dbReference>
<dbReference type="InterPro" id="IPR003329">
    <property type="entry name" value="Cytidylyl_trans"/>
</dbReference>
<dbReference type="InterPro" id="IPR004528">
    <property type="entry name" value="KdsB"/>
</dbReference>
<dbReference type="InterPro" id="IPR029044">
    <property type="entry name" value="Nucleotide-diphossugar_trans"/>
</dbReference>
<dbReference type="NCBIfam" id="TIGR00466">
    <property type="entry name" value="kdsB"/>
    <property type="match status" value="1"/>
</dbReference>
<dbReference type="NCBIfam" id="NF003948">
    <property type="entry name" value="PRK05450.1-1"/>
    <property type="match status" value="1"/>
</dbReference>
<dbReference type="NCBIfam" id="NF003952">
    <property type="entry name" value="PRK05450.1-5"/>
    <property type="match status" value="1"/>
</dbReference>
<dbReference type="PANTHER" id="PTHR42866">
    <property type="entry name" value="3-DEOXY-MANNO-OCTULOSONATE CYTIDYLYLTRANSFERASE"/>
    <property type="match status" value="1"/>
</dbReference>
<dbReference type="PANTHER" id="PTHR42866:SF2">
    <property type="entry name" value="3-DEOXY-MANNO-OCTULOSONATE CYTIDYLYLTRANSFERASE, MITOCHONDRIAL"/>
    <property type="match status" value="1"/>
</dbReference>
<dbReference type="Pfam" id="PF02348">
    <property type="entry name" value="CTP_transf_3"/>
    <property type="match status" value="1"/>
</dbReference>
<dbReference type="SUPFAM" id="SSF53448">
    <property type="entry name" value="Nucleotide-diphospho-sugar transferases"/>
    <property type="match status" value="1"/>
</dbReference>
<gene>
    <name evidence="1" type="primary">kdsB</name>
    <name type="ordered locus">Xaut_2630</name>
</gene>
<feature type="chain" id="PRO_0000370170" description="3-deoxy-manno-octulosonate cytidylyltransferase">
    <location>
        <begin position="1"/>
        <end position="255"/>
    </location>
</feature>
<protein>
    <recommendedName>
        <fullName evidence="1">3-deoxy-manno-octulosonate cytidylyltransferase</fullName>
        <ecNumber evidence="1">2.7.7.38</ecNumber>
    </recommendedName>
    <alternativeName>
        <fullName evidence="1">CMP-2-keto-3-deoxyoctulosonic acid synthase</fullName>
        <shortName evidence="1">CKS</shortName>
        <shortName evidence="1">CMP-KDO synthase</shortName>
    </alternativeName>
</protein>